<reference key="1">
    <citation type="journal article" date="1997" name="Nature">
        <title>The nucleotide sequence of Saccharomyces cerevisiae chromosome XIII.</title>
        <authorList>
            <person name="Bowman S."/>
            <person name="Churcher C.M."/>
            <person name="Badcock K."/>
            <person name="Brown D."/>
            <person name="Chillingworth T."/>
            <person name="Connor R."/>
            <person name="Dedman K."/>
            <person name="Devlin K."/>
            <person name="Gentles S."/>
            <person name="Hamlin N."/>
            <person name="Hunt S."/>
            <person name="Jagels K."/>
            <person name="Lye G."/>
            <person name="Moule S."/>
            <person name="Odell C."/>
            <person name="Pearson D."/>
            <person name="Rajandream M.A."/>
            <person name="Rice P."/>
            <person name="Skelton J."/>
            <person name="Walsh S.V."/>
            <person name="Whitehead S."/>
            <person name="Barrell B.G."/>
        </authorList>
    </citation>
    <scope>NUCLEOTIDE SEQUENCE [LARGE SCALE GENOMIC DNA]</scope>
    <source>
        <strain>ATCC 204508 / S288c</strain>
    </source>
</reference>
<reference key="2">
    <citation type="journal article" date="2014" name="G3 (Bethesda)">
        <title>The reference genome sequence of Saccharomyces cerevisiae: Then and now.</title>
        <authorList>
            <person name="Engel S.R."/>
            <person name="Dietrich F.S."/>
            <person name="Fisk D.G."/>
            <person name="Binkley G."/>
            <person name="Balakrishnan R."/>
            <person name="Costanzo M.C."/>
            <person name="Dwight S.S."/>
            <person name="Hitz B.C."/>
            <person name="Karra K."/>
            <person name="Nash R.S."/>
            <person name="Weng S."/>
            <person name="Wong E.D."/>
            <person name="Lloyd P."/>
            <person name="Skrzypek M.S."/>
            <person name="Miyasato S.R."/>
            <person name="Simison M."/>
            <person name="Cherry J.M."/>
        </authorList>
    </citation>
    <scope>GENOME REANNOTATION</scope>
    <source>
        <strain>ATCC 204508 / S288c</strain>
    </source>
</reference>
<reference key="3">
    <citation type="journal article" date="2007" name="Proc. Natl. Acad. Sci. U.S.A.">
        <title>Analysis of phosphorylation sites on proteins from Saccharomyces cerevisiae by electron transfer dissociation (ETD) mass spectrometry.</title>
        <authorList>
            <person name="Chi A."/>
            <person name="Huttenhower C."/>
            <person name="Geer L.Y."/>
            <person name="Coon J.J."/>
            <person name="Syka J.E.P."/>
            <person name="Bai D.L."/>
            <person name="Shabanowitz J."/>
            <person name="Burke D.J."/>
            <person name="Troyanskaya O.G."/>
            <person name="Hunt D.F."/>
        </authorList>
    </citation>
    <scope>PHOSPHORYLATION [LARGE SCALE ANALYSIS] AT SER-72</scope>
    <scope>IDENTIFICATION BY MASS SPECTROMETRY [LARGE SCALE ANALYSIS]</scope>
</reference>
<reference key="4">
    <citation type="journal article" date="2008" name="Mol. Cell. Proteomics">
        <title>A multidimensional chromatography technology for in-depth phosphoproteome analysis.</title>
        <authorList>
            <person name="Albuquerque C.P."/>
            <person name="Smolka M.B."/>
            <person name="Payne S.H."/>
            <person name="Bafna V."/>
            <person name="Eng J."/>
            <person name="Zhou H."/>
        </authorList>
    </citation>
    <scope>IDENTIFICATION BY MASS SPECTROMETRY [LARGE SCALE ANALYSIS]</scope>
</reference>
<reference key="5">
    <citation type="journal article" date="2009" name="Science">
        <title>Global analysis of Cdk1 substrate phosphorylation sites provides insights into evolution.</title>
        <authorList>
            <person name="Holt L.J."/>
            <person name="Tuch B.B."/>
            <person name="Villen J."/>
            <person name="Johnson A.D."/>
            <person name="Gygi S.P."/>
            <person name="Morgan D.O."/>
        </authorList>
    </citation>
    <scope>PHOSPHORYLATION [LARGE SCALE ANALYSIS] AT SER-72</scope>
    <scope>IDENTIFICATION BY MASS SPECTROMETRY [LARGE SCALE ANALYSIS]</scope>
</reference>
<gene>
    <name type="ordered locus">YML119W</name>
    <name type="ORF">YM7056.07</name>
</gene>
<protein>
    <recommendedName>
        <fullName>Uncharacterized protein YML119W</fullName>
    </recommendedName>
</protein>
<feature type="chain" id="PRO_0000203240" description="Uncharacterized protein YML119W">
    <location>
        <begin position="1"/>
        <end position="357"/>
    </location>
</feature>
<feature type="region of interest" description="Disordered" evidence="1">
    <location>
        <begin position="79"/>
        <end position="98"/>
    </location>
</feature>
<feature type="region of interest" description="Disordered" evidence="1">
    <location>
        <begin position="264"/>
        <end position="290"/>
    </location>
</feature>
<feature type="region of interest" description="Disordered" evidence="1">
    <location>
        <begin position="323"/>
        <end position="357"/>
    </location>
</feature>
<feature type="compositionally biased region" description="Acidic residues" evidence="1">
    <location>
        <begin position="324"/>
        <end position="335"/>
    </location>
</feature>
<feature type="modified residue" description="Phosphoserine" evidence="2 3">
    <location>
        <position position="72"/>
    </location>
</feature>
<accession>Q03208</accession>
<accession>D6W0G5</accession>
<comment type="interaction">
    <interactant intactId="EBI-27965">
        <id>Q03208</id>
    </interactant>
    <interactant intactId="EBI-36507">
        <id>Q07834</id>
        <label>YLL032C</label>
    </interactant>
    <organismsDiffer>false</organismsDiffer>
    <experiments>3</experiments>
</comment>
<keyword id="KW-0597">Phosphoprotein</keyword>
<keyword id="KW-1185">Reference proteome</keyword>
<dbReference type="EMBL" id="Z49218">
    <property type="protein sequence ID" value="CAA89161.1"/>
    <property type="molecule type" value="Genomic_DNA"/>
</dbReference>
<dbReference type="EMBL" id="BK006946">
    <property type="protein sequence ID" value="DAA09779.1"/>
    <property type="molecule type" value="Genomic_DNA"/>
</dbReference>
<dbReference type="PIR" id="S54065">
    <property type="entry name" value="S54065"/>
</dbReference>
<dbReference type="RefSeq" id="NP_013587.1">
    <property type="nucleotide sequence ID" value="NM_001182482.1"/>
</dbReference>
<dbReference type="BioGRID" id="35085">
    <property type="interactions" value="109"/>
</dbReference>
<dbReference type="DIP" id="DIP-1955N"/>
<dbReference type="FunCoup" id="Q03208">
    <property type="interactions" value="52"/>
</dbReference>
<dbReference type="IntAct" id="Q03208">
    <property type="interactions" value="6"/>
</dbReference>
<dbReference type="MINT" id="Q03208"/>
<dbReference type="STRING" id="4932.YML119W"/>
<dbReference type="iPTMnet" id="Q03208"/>
<dbReference type="PaxDb" id="4932-YML119W"/>
<dbReference type="PeptideAtlas" id="Q03208"/>
<dbReference type="EnsemblFungi" id="YML119W_mRNA">
    <property type="protein sequence ID" value="YML119W"/>
    <property type="gene ID" value="YML119W"/>
</dbReference>
<dbReference type="GeneID" id="854920"/>
<dbReference type="KEGG" id="sce:YML119W"/>
<dbReference type="AGR" id="SGD:S000004588"/>
<dbReference type="SGD" id="S000004588">
    <property type="gene designation" value="YML119W"/>
</dbReference>
<dbReference type="VEuPathDB" id="FungiDB:YML119W"/>
<dbReference type="eggNOG" id="ENOG502S8CK">
    <property type="taxonomic scope" value="Eukaryota"/>
</dbReference>
<dbReference type="HOGENOM" id="CLU_778794_0_0_1"/>
<dbReference type="InParanoid" id="Q03208"/>
<dbReference type="OMA" id="KFEKNYH"/>
<dbReference type="OrthoDB" id="3980759at2759"/>
<dbReference type="BioCyc" id="YEAST:G3O-32700-MONOMER"/>
<dbReference type="BioGRID-ORCS" id="854920">
    <property type="hits" value="0 hits in 10 CRISPR screens"/>
</dbReference>
<dbReference type="PRO" id="PR:Q03208"/>
<dbReference type="Proteomes" id="UP000002311">
    <property type="component" value="Chromosome XIII"/>
</dbReference>
<dbReference type="RNAct" id="Q03208">
    <property type="molecule type" value="protein"/>
</dbReference>
<dbReference type="GO" id="GO:0005737">
    <property type="term" value="C:cytoplasm"/>
    <property type="evidence" value="ECO:0007005"/>
    <property type="project" value="SGD"/>
</dbReference>
<sequence>MSPSPSVSPRRTLNNKSSYINNSGGLVLPPTQFNLNQQPVLSFQQKATFDSNQQFFYYPESPTKNLRPRFNSISQVNKGVNEDHYTGGGSSNNNRPSRYTNTMGAANTNVNSHPHHQSVSHLNSKSLKFNQTKEVSSINEIIFPSRTCTKKRYFTKPIDLYGTRSSTSVAPKLTNSPTKSKTNFNIKKCILPRSVVTTYKLPSPVHETIDDISKKIIILLISLKFEKNYHFLQPIQLSTNSKTRISKSLDELCGVQLTSTLRQQKQLQGNSKPVKNLPNSNAKQRAGASVSTNANESFELSFDGKAMDRSDIFRMVDSFSIAISDEDEEDEEEDSFQQRSANNRILPAEILSNEPLK</sequence>
<evidence type="ECO:0000256" key="1">
    <source>
        <dbReference type="SAM" id="MobiDB-lite"/>
    </source>
</evidence>
<evidence type="ECO:0007744" key="2">
    <source>
    </source>
</evidence>
<evidence type="ECO:0007744" key="3">
    <source>
    </source>
</evidence>
<proteinExistence type="evidence at protein level"/>
<name>YML9_YEAST</name>
<organism>
    <name type="scientific">Saccharomyces cerevisiae (strain ATCC 204508 / S288c)</name>
    <name type="common">Baker's yeast</name>
    <dbReference type="NCBI Taxonomy" id="559292"/>
    <lineage>
        <taxon>Eukaryota</taxon>
        <taxon>Fungi</taxon>
        <taxon>Dikarya</taxon>
        <taxon>Ascomycota</taxon>
        <taxon>Saccharomycotina</taxon>
        <taxon>Saccharomycetes</taxon>
        <taxon>Saccharomycetales</taxon>
        <taxon>Saccharomycetaceae</taxon>
        <taxon>Saccharomyces</taxon>
    </lineage>
</organism>